<accession>Q5LSV2</accession>
<gene>
    <name evidence="1" type="primary">frr</name>
    <name type="ordered locus">SPO1664</name>
</gene>
<name>RRF_RUEPO</name>
<dbReference type="EMBL" id="CP000031">
    <property type="protein sequence ID" value="AAV94949.1"/>
    <property type="molecule type" value="Genomic_DNA"/>
</dbReference>
<dbReference type="RefSeq" id="WP_011047399.1">
    <property type="nucleotide sequence ID" value="NC_003911.12"/>
</dbReference>
<dbReference type="SMR" id="Q5LSV2"/>
<dbReference type="STRING" id="246200.SPO1664"/>
<dbReference type="PaxDb" id="246200-SPO1664"/>
<dbReference type="KEGG" id="sil:SPO1664"/>
<dbReference type="eggNOG" id="COG0233">
    <property type="taxonomic scope" value="Bacteria"/>
</dbReference>
<dbReference type="HOGENOM" id="CLU_073981_2_0_5"/>
<dbReference type="OrthoDB" id="9804006at2"/>
<dbReference type="Proteomes" id="UP000001023">
    <property type="component" value="Chromosome"/>
</dbReference>
<dbReference type="GO" id="GO:0005829">
    <property type="term" value="C:cytosol"/>
    <property type="evidence" value="ECO:0007669"/>
    <property type="project" value="GOC"/>
</dbReference>
<dbReference type="GO" id="GO:0043023">
    <property type="term" value="F:ribosomal large subunit binding"/>
    <property type="evidence" value="ECO:0007669"/>
    <property type="project" value="TreeGrafter"/>
</dbReference>
<dbReference type="GO" id="GO:0002184">
    <property type="term" value="P:cytoplasmic translational termination"/>
    <property type="evidence" value="ECO:0007669"/>
    <property type="project" value="TreeGrafter"/>
</dbReference>
<dbReference type="CDD" id="cd00520">
    <property type="entry name" value="RRF"/>
    <property type="match status" value="1"/>
</dbReference>
<dbReference type="FunFam" id="1.10.132.20:FF:000001">
    <property type="entry name" value="Ribosome-recycling factor"/>
    <property type="match status" value="1"/>
</dbReference>
<dbReference type="FunFam" id="3.30.1360.40:FF:000001">
    <property type="entry name" value="Ribosome-recycling factor"/>
    <property type="match status" value="1"/>
</dbReference>
<dbReference type="Gene3D" id="3.30.1360.40">
    <property type="match status" value="1"/>
</dbReference>
<dbReference type="Gene3D" id="1.10.132.20">
    <property type="entry name" value="Ribosome-recycling factor"/>
    <property type="match status" value="1"/>
</dbReference>
<dbReference type="HAMAP" id="MF_00040">
    <property type="entry name" value="RRF"/>
    <property type="match status" value="1"/>
</dbReference>
<dbReference type="InterPro" id="IPR002661">
    <property type="entry name" value="Ribosome_recyc_fac"/>
</dbReference>
<dbReference type="InterPro" id="IPR023584">
    <property type="entry name" value="Ribosome_recyc_fac_dom"/>
</dbReference>
<dbReference type="InterPro" id="IPR036191">
    <property type="entry name" value="RRF_sf"/>
</dbReference>
<dbReference type="NCBIfam" id="TIGR00496">
    <property type="entry name" value="frr"/>
    <property type="match status" value="1"/>
</dbReference>
<dbReference type="PANTHER" id="PTHR20982:SF3">
    <property type="entry name" value="MITOCHONDRIAL RIBOSOME RECYCLING FACTOR PSEUDO 1"/>
    <property type="match status" value="1"/>
</dbReference>
<dbReference type="PANTHER" id="PTHR20982">
    <property type="entry name" value="RIBOSOME RECYCLING FACTOR"/>
    <property type="match status" value="1"/>
</dbReference>
<dbReference type="Pfam" id="PF01765">
    <property type="entry name" value="RRF"/>
    <property type="match status" value="1"/>
</dbReference>
<dbReference type="SUPFAM" id="SSF55194">
    <property type="entry name" value="Ribosome recycling factor, RRF"/>
    <property type="match status" value="1"/>
</dbReference>
<reference key="1">
    <citation type="journal article" date="2004" name="Nature">
        <title>Genome sequence of Silicibacter pomeroyi reveals adaptations to the marine environment.</title>
        <authorList>
            <person name="Moran M.A."/>
            <person name="Buchan A."/>
            <person name="Gonzalez J.M."/>
            <person name="Heidelberg J.F."/>
            <person name="Whitman W.B."/>
            <person name="Kiene R.P."/>
            <person name="Henriksen J.R."/>
            <person name="King G.M."/>
            <person name="Belas R."/>
            <person name="Fuqua C."/>
            <person name="Brinkac L.M."/>
            <person name="Lewis M."/>
            <person name="Johri S."/>
            <person name="Weaver B."/>
            <person name="Pai G."/>
            <person name="Eisen J.A."/>
            <person name="Rahe E."/>
            <person name="Sheldon W.M."/>
            <person name="Ye W."/>
            <person name="Miller T.R."/>
            <person name="Carlton J."/>
            <person name="Rasko D.A."/>
            <person name="Paulsen I.T."/>
            <person name="Ren Q."/>
            <person name="Daugherty S.C."/>
            <person name="DeBoy R.T."/>
            <person name="Dodson R.J."/>
            <person name="Durkin A.S."/>
            <person name="Madupu R."/>
            <person name="Nelson W.C."/>
            <person name="Sullivan S.A."/>
            <person name="Rosovitz M.J."/>
            <person name="Haft D.H."/>
            <person name="Selengut J."/>
            <person name="Ward N."/>
        </authorList>
    </citation>
    <scope>NUCLEOTIDE SEQUENCE [LARGE SCALE GENOMIC DNA]</scope>
    <source>
        <strain>ATCC 700808 / DSM 15171 / DSS-3</strain>
    </source>
</reference>
<reference key="2">
    <citation type="journal article" date="2014" name="Stand. Genomic Sci.">
        <title>An updated genome annotation for the model marine bacterium Ruegeria pomeroyi DSS-3.</title>
        <authorList>
            <person name="Rivers A.R."/>
            <person name="Smith C.B."/>
            <person name="Moran M.A."/>
        </authorList>
    </citation>
    <scope>GENOME REANNOTATION</scope>
    <source>
        <strain>ATCC 700808 / DSM 15171 / DSS-3</strain>
    </source>
</reference>
<organism>
    <name type="scientific">Ruegeria pomeroyi (strain ATCC 700808 / DSM 15171 / DSS-3)</name>
    <name type="common">Silicibacter pomeroyi</name>
    <dbReference type="NCBI Taxonomy" id="246200"/>
    <lineage>
        <taxon>Bacteria</taxon>
        <taxon>Pseudomonadati</taxon>
        <taxon>Pseudomonadota</taxon>
        <taxon>Alphaproteobacteria</taxon>
        <taxon>Rhodobacterales</taxon>
        <taxon>Roseobacteraceae</taxon>
        <taxon>Ruegeria</taxon>
    </lineage>
</organism>
<proteinExistence type="inferred from homology"/>
<protein>
    <recommendedName>
        <fullName evidence="1">Ribosome-recycling factor</fullName>
        <shortName evidence="1">RRF</shortName>
    </recommendedName>
    <alternativeName>
        <fullName evidence="1">Ribosome-releasing factor</fullName>
    </alternativeName>
</protein>
<keyword id="KW-0963">Cytoplasm</keyword>
<keyword id="KW-0648">Protein biosynthesis</keyword>
<keyword id="KW-1185">Reference proteome</keyword>
<sequence length="187" mass="21017">MSDDFELDTDDLKRRMDGAMANLKTEFASLRTGRASGSMLEPIQVEAYGQMTPINQIGTVNVPEPRMVTINVWDKSMVGKVEKAIRESGLGINPQLNGTIIMLPIPELNEERRRELTKVAGQYAEHARVAIRNVRRDGMDQIKKAKADGISEDDQKFWEAEVQELTDKMIKVVDAALETKQAEIMQV</sequence>
<feature type="chain" id="PRO_0000167537" description="Ribosome-recycling factor">
    <location>
        <begin position="1"/>
        <end position="187"/>
    </location>
</feature>
<evidence type="ECO:0000255" key="1">
    <source>
        <dbReference type="HAMAP-Rule" id="MF_00040"/>
    </source>
</evidence>
<comment type="function">
    <text evidence="1">Responsible for the release of ribosomes from messenger RNA at the termination of protein biosynthesis. May increase the efficiency of translation by recycling ribosomes from one round of translation to another.</text>
</comment>
<comment type="subcellular location">
    <subcellularLocation>
        <location evidence="1">Cytoplasm</location>
    </subcellularLocation>
</comment>
<comment type="similarity">
    <text evidence="1">Belongs to the RRF family.</text>
</comment>